<name>MT1A_ARATH</name>
<protein>
    <recommendedName>
        <fullName>Metallothionein-like protein 1A</fullName>
        <shortName>MT-1A</shortName>
    </recommendedName>
    <alternativeName>
        <fullName>MT-2</fullName>
    </alternativeName>
    <alternativeName>
        <fullName>MT-Q</fullName>
    </alternativeName>
    <alternativeName>
        <fullName evidence="6">Protein LIGHT STRESS-REGULATED 4</fullName>
    </alternativeName>
</protein>
<dbReference type="EMBL" id="U15130">
    <property type="protein sequence ID" value="AAA50251.1"/>
    <property type="molecule type" value="mRNA"/>
</dbReference>
<dbReference type="EMBL" id="U11253">
    <property type="protein sequence ID" value="AAA82209.1"/>
    <property type="molecule type" value="Genomic_DNA"/>
</dbReference>
<dbReference type="EMBL" id="AC007583">
    <property type="protein sequence ID" value="AAF75098.1"/>
    <property type="molecule type" value="Genomic_DNA"/>
</dbReference>
<dbReference type="EMBL" id="CP002684">
    <property type="protein sequence ID" value="AEE28147.1"/>
    <property type="molecule type" value="Genomic_DNA"/>
</dbReference>
<dbReference type="EMBL" id="AF332449">
    <property type="protein sequence ID" value="AAG48812.1"/>
    <property type="molecule type" value="mRNA"/>
</dbReference>
<dbReference type="EMBL" id="AF386921">
    <property type="protein sequence ID" value="AAK62366.1"/>
    <property type="molecule type" value="mRNA"/>
</dbReference>
<dbReference type="EMBL" id="AY128916">
    <property type="protein sequence ID" value="AAM91316.1"/>
    <property type="molecule type" value="mRNA"/>
</dbReference>
<dbReference type="EMBL" id="AK230254">
    <property type="protein sequence ID" value="BAF02056.1"/>
    <property type="molecule type" value="mRNA"/>
</dbReference>
<dbReference type="EMBL" id="AY086003">
    <property type="protein sequence ID" value="AAM63212.1"/>
    <property type="molecule type" value="mRNA"/>
</dbReference>
<dbReference type="PIR" id="S57858">
    <property type="entry name" value="S57858"/>
</dbReference>
<dbReference type="RefSeq" id="NP_172239.1">
    <property type="nucleotide sequence ID" value="NM_100633.2"/>
</dbReference>
<dbReference type="STRING" id="3702.P43392"/>
<dbReference type="EnsemblPlants" id="AT1G07600.1">
    <property type="protein sequence ID" value="AT1G07600.1"/>
    <property type="gene ID" value="AT1G07600"/>
</dbReference>
<dbReference type="GeneID" id="837273"/>
<dbReference type="Gramene" id="AT1G07600.1">
    <property type="protein sequence ID" value="AT1G07600.1"/>
    <property type="gene ID" value="AT1G07600"/>
</dbReference>
<dbReference type="KEGG" id="ath:AT1G07600"/>
<dbReference type="Araport" id="AT1G07600"/>
<dbReference type="TAIR" id="AT1G07600">
    <property type="gene designation" value="MT1A"/>
</dbReference>
<dbReference type="eggNOG" id="KOG4738">
    <property type="taxonomic scope" value="Eukaryota"/>
</dbReference>
<dbReference type="HOGENOM" id="CLU_3208289_0_0_1"/>
<dbReference type="InParanoid" id="P43392"/>
<dbReference type="PRO" id="PR:P43392"/>
<dbReference type="Proteomes" id="UP000006548">
    <property type="component" value="Chromosome 1"/>
</dbReference>
<dbReference type="GO" id="GO:0005507">
    <property type="term" value="F:copper ion binding"/>
    <property type="evidence" value="ECO:0000314"/>
    <property type="project" value="TAIR"/>
</dbReference>
<dbReference type="GO" id="GO:0046872">
    <property type="term" value="F:metal ion binding"/>
    <property type="evidence" value="ECO:0000304"/>
    <property type="project" value="TAIR"/>
</dbReference>
<dbReference type="GO" id="GO:0046688">
    <property type="term" value="P:response to copper ion"/>
    <property type="evidence" value="ECO:0000270"/>
    <property type="project" value="TAIR"/>
</dbReference>
<dbReference type="GO" id="GO:0009644">
    <property type="term" value="P:response to high light intensity"/>
    <property type="evidence" value="ECO:0000270"/>
    <property type="project" value="TAIR"/>
</dbReference>
<comment type="function">
    <text evidence="2 3 4 7">Metallothioneins have a high content of cysteine residues that bind various heavy metals (Probable). Functions as a metal chelator of copper (Cu) and zinc (Zn). Plays a role in Cu homeostasis in the roots under elevated Cu concentration. Functions cooperatively with the phytochelatin synthase PCS1 to protect plants from Cu and cadmium (Cd) toxicity (PubMed:18287486). Plays a role in Cu homeostasis, specifically in the remobilization of Cu from senescing leaves. The mobilization of Cu from internal sources is important for seed development (PubMed:24635746). Confers tolerance to Cd and plays a role in Cd and Zn homeostasis (PubMed:16240177).</text>
</comment>
<comment type="tissue specificity">
    <text evidence="5">Expressed in phloem and mesophyll cells of leaves, vascular tissues of cotyledons, sepals and petals. Expressed in anthers. Expressed in root endodermis and at lower levels in cortex of mature region of roots.</text>
</comment>
<comment type="induction">
    <text evidence="1">By light stress, drought and salt stress.</text>
</comment>
<comment type="similarity">
    <text evidence="7">Belongs to the metallothionein superfamily. Type 15 family.</text>
</comment>
<reference key="1">
    <citation type="journal article" date="1995" name="DNA Seq.">
        <title>Transcripts of metallothionein genes in Arabidopsis thaliana.</title>
        <authorList>
            <person name="Yeh S.C."/>
            <person name="Hsieh H.M."/>
            <person name="Huang P.C."/>
        </authorList>
    </citation>
    <scope>NUCLEOTIDE SEQUENCE [MRNA]</scope>
    <source>
        <strain>cv. Columbia</strain>
    </source>
</reference>
<reference key="2">
    <citation type="journal article" date="1995" name="Mol. Gen. Genet.">
        <title>Structure, organization and expression of the metallothionein gene family in Arabidopsis.</title>
        <authorList>
            <person name="Zhou J."/>
            <person name="Goldsbrough P.B."/>
        </authorList>
    </citation>
    <scope>NUCLEOTIDE SEQUENCE [GENOMIC DNA]</scope>
    <source>
        <strain>cv. Columbia</strain>
    </source>
</reference>
<reference key="3">
    <citation type="journal article" date="2000" name="Nature">
        <title>Sequence and analysis of chromosome 1 of the plant Arabidopsis thaliana.</title>
        <authorList>
            <person name="Theologis A."/>
            <person name="Ecker J.R."/>
            <person name="Palm C.J."/>
            <person name="Federspiel N.A."/>
            <person name="Kaul S."/>
            <person name="White O."/>
            <person name="Alonso J."/>
            <person name="Altafi H."/>
            <person name="Araujo R."/>
            <person name="Bowman C.L."/>
            <person name="Brooks S.Y."/>
            <person name="Buehler E."/>
            <person name="Chan A."/>
            <person name="Chao Q."/>
            <person name="Chen H."/>
            <person name="Cheuk R.F."/>
            <person name="Chin C.W."/>
            <person name="Chung M.K."/>
            <person name="Conn L."/>
            <person name="Conway A.B."/>
            <person name="Conway A.R."/>
            <person name="Creasy T.H."/>
            <person name="Dewar K."/>
            <person name="Dunn P."/>
            <person name="Etgu P."/>
            <person name="Feldblyum T.V."/>
            <person name="Feng J.-D."/>
            <person name="Fong B."/>
            <person name="Fujii C.Y."/>
            <person name="Gill J.E."/>
            <person name="Goldsmith A.D."/>
            <person name="Haas B."/>
            <person name="Hansen N.F."/>
            <person name="Hughes B."/>
            <person name="Huizar L."/>
            <person name="Hunter J.L."/>
            <person name="Jenkins J."/>
            <person name="Johnson-Hopson C."/>
            <person name="Khan S."/>
            <person name="Khaykin E."/>
            <person name="Kim C.J."/>
            <person name="Koo H.L."/>
            <person name="Kremenetskaia I."/>
            <person name="Kurtz D.B."/>
            <person name="Kwan A."/>
            <person name="Lam B."/>
            <person name="Langin-Hooper S."/>
            <person name="Lee A."/>
            <person name="Lee J.M."/>
            <person name="Lenz C.A."/>
            <person name="Li J.H."/>
            <person name="Li Y.-P."/>
            <person name="Lin X."/>
            <person name="Liu S.X."/>
            <person name="Liu Z.A."/>
            <person name="Luros J.S."/>
            <person name="Maiti R."/>
            <person name="Marziali A."/>
            <person name="Militscher J."/>
            <person name="Miranda M."/>
            <person name="Nguyen M."/>
            <person name="Nierman W.C."/>
            <person name="Osborne B.I."/>
            <person name="Pai G."/>
            <person name="Peterson J."/>
            <person name="Pham P.K."/>
            <person name="Rizzo M."/>
            <person name="Rooney T."/>
            <person name="Rowley D."/>
            <person name="Sakano H."/>
            <person name="Salzberg S.L."/>
            <person name="Schwartz J.R."/>
            <person name="Shinn P."/>
            <person name="Southwick A.M."/>
            <person name="Sun H."/>
            <person name="Tallon L.J."/>
            <person name="Tambunga G."/>
            <person name="Toriumi M.J."/>
            <person name="Town C.D."/>
            <person name="Utterback T."/>
            <person name="Van Aken S."/>
            <person name="Vaysberg M."/>
            <person name="Vysotskaia V.S."/>
            <person name="Walker M."/>
            <person name="Wu D."/>
            <person name="Yu G."/>
            <person name="Fraser C.M."/>
            <person name="Venter J.C."/>
            <person name="Davis R.W."/>
        </authorList>
    </citation>
    <scope>NUCLEOTIDE SEQUENCE [LARGE SCALE GENOMIC DNA]</scope>
    <source>
        <strain>cv. Columbia</strain>
    </source>
</reference>
<reference key="4">
    <citation type="journal article" date="2017" name="Plant J.">
        <title>Araport11: a complete reannotation of the Arabidopsis thaliana reference genome.</title>
        <authorList>
            <person name="Cheng C.Y."/>
            <person name="Krishnakumar V."/>
            <person name="Chan A.P."/>
            <person name="Thibaud-Nissen F."/>
            <person name="Schobel S."/>
            <person name="Town C.D."/>
        </authorList>
    </citation>
    <scope>GENOME REANNOTATION</scope>
    <source>
        <strain>cv. Columbia</strain>
    </source>
</reference>
<reference key="5">
    <citation type="journal article" date="2003" name="Science">
        <title>Empirical analysis of transcriptional activity in the Arabidopsis genome.</title>
        <authorList>
            <person name="Yamada K."/>
            <person name="Lim J."/>
            <person name="Dale J.M."/>
            <person name="Chen H."/>
            <person name="Shinn P."/>
            <person name="Palm C.J."/>
            <person name="Southwick A.M."/>
            <person name="Wu H.C."/>
            <person name="Kim C.J."/>
            <person name="Nguyen M."/>
            <person name="Pham P.K."/>
            <person name="Cheuk R.F."/>
            <person name="Karlin-Newmann G."/>
            <person name="Liu S.X."/>
            <person name="Lam B."/>
            <person name="Sakano H."/>
            <person name="Wu T."/>
            <person name="Yu G."/>
            <person name="Miranda M."/>
            <person name="Quach H.L."/>
            <person name="Tripp M."/>
            <person name="Chang C.H."/>
            <person name="Lee J.M."/>
            <person name="Toriumi M.J."/>
            <person name="Chan M.M."/>
            <person name="Tang C.C."/>
            <person name="Onodera C.S."/>
            <person name="Deng J.M."/>
            <person name="Akiyama K."/>
            <person name="Ansari Y."/>
            <person name="Arakawa T."/>
            <person name="Banh J."/>
            <person name="Banno F."/>
            <person name="Bowser L."/>
            <person name="Brooks S.Y."/>
            <person name="Carninci P."/>
            <person name="Chao Q."/>
            <person name="Choy N."/>
            <person name="Enju A."/>
            <person name="Goldsmith A.D."/>
            <person name="Gurjal M."/>
            <person name="Hansen N.F."/>
            <person name="Hayashizaki Y."/>
            <person name="Johnson-Hopson C."/>
            <person name="Hsuan V.W."/>
            <person name="Iida K."/>
            <person name="Karnes M."/>
            <person name="Khan S."/>
            <person name="Koesema E."/>
            <person name="Ishida J."/>
            <person name="Jiang P.X."/>
            <person name="Jones T."/>
            <person name="Kawai J."/>
            <person name="Kamiya A."/>
            <person name="Meyers C."/>
            <person name="Nakajima M."/>
            <person name="Narusaka M."/>
            <person name="Seki M."/>
            <person name="Sakurai T."/>
            <person name="Satou M."/>
            <person name="Tamse R."/>
            <person name="Vaysberg M."/>
            <person name="Wallender E.K."/>
            <person name="Wong C."/>
            <person name="Yamamura Y."/>
            <person name="Yuan S."/>
            <person name="Shinozaki K."/>
            <person name="Davis R.W."/>
            <person name="Theologis A."/>
            <person name="Ecker J.R."/>
        </authorList>
    </citation>
    <scope>NUCLEOTIDE SEQUENCE [LARGE SCALE MRNA]</scope>
    <source>
        <strain>cv. Columbia</strain>
    </source>
</reference>
<reference key="6">
    <citation type="submission" date="2006-07" db="EMBL/GenBank/DDBJ databases">
        <title>Large-scale analysis of RIKEN Arabidopsis full-length (RAFL) cDNAs.</title>
        <authorList>
            <person name="Totoki Y."/>
            <person name="Seki M."/>
            <person name="Ishida J."/>
            <person name="Nakajima M."/>
            <person name="Enju A."/>
            <person name="Kamiya A."/>
            <person name="Narusaka M."/>
            <person name="Shin-i T."/>
            <person name="Nakagawa M."/>
            <person name="Sakamoto N."/>
            <person name="Oishi K."/>
            <person name="Kohara Y."/>
            <person name="Kobayashi M."/>
            <person name="Toyoda A."/>
            <person name="Sakaki Y."/>
            <person name="Sakurai T."/>
            <person name="Iida K."/>
            <person name="Akiyama K."/>
            <person name="Satou M."/>
            <person name="Toyoda T."/>
            <person name="Konagaya A."/>
            <person name="Carninci P."/>
            <person name="Kawai J."/>
            <person name="Hayashizaki Y."/>
            <person name="Shinozaki K."/>
        </authorList>
    </citation>
    <scope>NUCLEOTIDE SEQUENCE [LARGE SCALE MRNA]</scope>
    <source>
        <strain>cv. Columbia</strain>
    </source>
</reference>
<reference key="7">
    <citation type="submission" date="2002-03" db="EMBL/GenBank/DDBJ databases">
        <title>Full-length cDNA from Arabidopsis thaliana.</title>
        <authorList>
            <person name="Brover V.V."/>
            <person name="Troukhan M.E."/>
            <person name="Alexandrov N.A."/>
            <person name="Lu Y.-P."/>
            <person name="Flavell R.B."/>
            <person name="Feldmann K.A."/>
        </authorList>
    </citation>
    <scope>NUCLEOTIDE SEQUENCE [LARGE SCALE MRNA]</scope>
</reference>
<reference key="8">
    <citation type="journal article" date="2001" name="Eur. J. Biochem.">
        <title>Identification of genes expressed in response to light stress in leaves of Arabidopsis thaliana using RNA differential display.</title>
        <authorList>
            <person name="Dunaeva M."/>
            <person name="Adamska I."/>
        </authorList>
    </citation>
    <scope>INDUCTION</scope>
</reference>
<reference key="9">
    <citation type="journal article" date="2003" name="New Phytol.">
        <title>Characterization of the Arabidopsis metallothionein gene family: tissue-specific expression and induction during senescence and in response to copper.</title>
        <authorList>
            <person name="Guo W.J."/>
            <person name="Bundithya W."/>
            <person name="Goldsbrough P.B."/>
        </authorList>
    </citation>
    <scope>TISSUE SPECIFICITY</scope>
</reference>
<reference key="10">
    <citation type="journal article" date="2005" name="Plant Mol. Biol.">
        <title>The plant MT1 metallothioneins are stabilized by binding cadmiums and are required for cadmium tolerance and accumulation.</title>
        <authorList>
            <person name="Zimeri A.M."/>
            <person name="Dhankher O.P."/>
            <person name="McCaig B."/>
            <person name="Meagher R.B."/>
        </authorList>
    </citation>
    <scope>FUNCTION</scope>
</reference>
<reference key="11">
    <citation type="journal article" date="2008" name="Plant Physiol.">
        <title>Examining the specific contributions of individual Arabidopsis metallothioneins to copper distribution and metal tolerance.</title>
        <authorList>
            <person name="Guo W.J."/>
            <person name="Meetam M."/>
            <person name="Goldsbrough P.B."/>
        </authorList>
    </citation>
    <scope>FUNCTION</scope>
</reference>
<reference key="12">
    <citation type="journal article" date="2014" name="New Phytol.">
        <title>Metallothionein deficiency impacts copper accumulation and redistribution in leaves and seeds of Arabidopsis.</title>
        <authorList>
            <person name="Benatti M.R."/>
            <person name="Yookongkaew N."/>
            <person name="Meetam M."/>
            <person name="Guo W.J."/>
            <person name="Punyasuk N."/>
            <person name="Abuqamar S."/>
            <person name="Goldsbrough P."/>
        </authorList>
    </citation>
    <scope>FUNCTION</scope>
</reference>
<organism>
    <name type="scientific">Arabidopsis thaliana</name>
    <name type="common">Mouse-ear cress</name>
    <dbReference type="NCBI Taxonomy" id="3702"/>
    <lineage>
        <taxon>Eukaryota</taxon>
        <taxon>Viridiplantae</taxon>
        <taxon>Streptophyta</taxon>
        <taxon>Embryophyta</taxon>
        <taxon>Tracheophyta</taxon>
        <taxon>Spermatophyta</taxon>
        <taxon>Magnoliopsida</taxon>
        <taxon>eudicotyledons</taxon>
        <taxon>Gunneridae</taxon>
        <taxon>Pentapetalae</taxon>
        <taxon>rosids</taxon>
        <taxon>malvids</taxon>
        <taxon>Brassicales</taxon>
        <taxon>Brassicaceae</taxon>
        <taxon>Camelineae</taxon>
        <taxon>Arabidopsis</taxon>
    </lineage>
</organism>
<proteinExistence type="evidence at transcript level"/>
<gene>
    <name type="primary">MT1A</name>
    <name evidence="6" type="synonym">LSR4</name>
    <name type="ordered locus">At1g07600</name>
    <name type="ORF">F22G5_33</name>
    <name type="ORF">F24B9.34</name>
</gene>
<feature type="chain" id="PRO_0000197419" description="Metallothionein-like protein 1A">
    <location>
        <begin position="1"/>
        <end position="45"/>
    </location>
</feature>
<accession>P43392</accession>
<accession>Q0WLF1</accession>
<evidence type="ECO:0000269" key="1">
    <source>
    </source>
</evidence>
<evidence type="ECO:0000269" key="2">
    <source>
    </source>
</evidence>
<evidence type="ECO:0000269" key="3">
    <source>
    </source>
</evidence>
<evidence type="ECO:0000269" key="4">
    <source>
    </source>
</evidence>
<evidence type="ECO:0000269" key="5">
    <source ref="9"/>
</evidence>
<evidence type="ECO:0000303" key="6">
    <source>
    </source>
</evidence>
<evidence type="ECO:0000305" key="7"/>
<keyword id="KW-0479">Metal-binding</keyword>
<keyword id="KW-0480">Metal-thiolate cluster</keyword>
<keyword id="KW-1185">Reference proteome</keyword>
<keyword id="KW-0346">Stress response</keyword>
<sequence>MADSNCGCGSSCKCGDSCSCEKNYNKECDNCSCGSNCSCGSNCNC</sequence>